<evidence type="ECO:0000255" key="1">
    <source>
        <dbReference type="HAMAP-Rule" id="MF_01188"/>
    </source>
</evidence>
<evidence type="ECO:0000256" key="2">
    <source>
        <dbReference type="SAM" id="MobiDB-lite"/>
    </source>
</evidence>
<organism>
    <name type="scientific">Pectobacterium carotovorum subsp. carotovorum (strain PC1)</name>
    <dbReference type="NCBI Taxonomy" id="561230"/>
    <lineage>
        <taxon>Bacteria</taxon>
        <taxon>Pseudomonadati</taxon>
        <taxon>Pseudomonadota</taxon>
        <taxon>Gammaproteobacteria</taxon>
        <taxon>Enterobacterales</taxon>
        <taxon>Pectobacteriaceae</taxon>
        <taxon>Pectobacterium</taxon>
    </lineage>
</organism>
<accession>C6DIS1</accession>
<dbReference type="EMBL" id="CP001657">
    <property type="protein sequence ID" value="ACT11371.1"/>
    <property type="molecule type" value="Genomic_DNA"/>
</dbReference>
<dbReference type="RefSeq" id="WP_012773030.1">
    <property type="nucleotide sequence ID" value="NC_012917.1"/>
</dbReference>
<dbReference type="STRING" id="561230.PC1_0312"/>
<dbReference type="KEGG" id="pct:PC1_0312"/>
<dbReference type="eggNOG" id="COG5463">
    <property type="taxonomic scope" value="Bacteria"/>
</dbReference>
<dbReference type="HOGENOM" id="CLU_095624_0_0_6"/>
<dbReference type="OrthoDB" id="5903948at2"/>
<dbReference type="Proteomes" id="UP000002736">
    <property type="component" value="Chromosome"/>
</dbReference>
<dbReference type="HAMAP" id="MF_01188">
    <property type="entry name" value="UPF0441"/>
    <property type="match status" value="1"/>
</dbReference>
<dbReference type="InterPro" id="IPR009576">
    <property type="entry name" value="Biofilm_formation_YgiB"/>
</dbReference>
<dbReference type="NCBIfam" id="NF008655">
    <property type="entry name" value="PRK11653.1"/>
    <property type="match status" value="1"/>
</dbReference>
<dbReference type="Pfam" id="PF06693">
    <property type="entry name" value="DUF1190"/>
    <property type="match status" value="1"/>
</dbReference>
<name>Y312_PECCP</name>
<proteinExistence type="inferred from homology"/>
<sequence>MKRTKNINQEMFRKEWRTHRLAPVALAVSAVFFLAGCEQTDETVSLYQNADDCSSANPSMAAQCTTAYNNALKEAEKTAPKYATKEDCVAEFGEAQCTQTPAPAQAGMAAESQQGGGMSWMPLMAGYMMGRMMGGGAGFAQQPLFSPKTPASPANGQFVDASGKNYGNATTGRTMTVPKTALAPKPATTSTITRGGFGETVAKQNSMQRSSASSSSSSSRSMGG</sequence>
<comment type="similarity">
    <text evidence="1">Belongs to the UPF0441 family.</text>
</comment>
<gene>
    <name type="ordered locus">PC1_0312</name>
</gene>
<feature type="chain" id="PRO_1000213790" description="UPF0441 protein PC1_0312">
    <location>
        <begin position="1"/>
        <end position="224"/>
    </location>
</feature>
<feature type="region of interest" description="Disordered" evidence="2">
    <location>
        <begin position="178"/>
        <end position="224"/>
    </location>
</feature>
<feature type="compositionally biased region" description="Low complexity" evidence="2">
    <location>
        <begin position="209"/>
        <end position="224"/>
    </location>
</feature>
<protein>
    <recommendedName>
        <fullName evidence="1">UPF0441 protein PC1_0312</fullName>
    </recommendedName>
</protein>
<reference key="1">
    <citation type="submission" date="2009-07" db="EMBL/GenBank/DDBJ databases">
        <title>Complete sequence of Pectobacterium carotovorum subsp. carotovorum PC1.</title>
        <authorList>
            <consortium name="US DOE Joint Genome Institute"/>
            <person name="Lucas S."/>
            <person name="Copeland A."/>
            <person name="Lapidus A."/>
            <person name="Glavina del Rio T."/>
            <person name="Tice H."/>
            <person name="Bruce D."/>
            <person name="Goodwin L."/>
            <person name="Pitluck S."/>
            <person name="Munk A.C."/>
            <person name="Brettin T."/>
            <person name="Detter J.C."/>
            <person name="Han C."/>
            <person name="Tapia R."/>
            <person name="Larimer F."/>
            <person name="Land M."/>
            <person name="Hauser L."/>
            <person name="Kyrpides N."/>
            <person name="Mikhailova N."/>
            <person name="Balakrishnan V."/>
            <person name="Glasner J."/>
            <person name="Perna N.T."/>
        </authorList>
    </citation>
    <scope>NUCLEOTIDE SEQUENCE [LARGE SCALE GENOMIC DNA]</scope>
    <source>
        <strain>PC1</strain>
    </source>
</reference>